<gene>
    <name type="primary">metG</name>
    <name type="ordered locus">OB0046</name>
</gene>
<feature type="chain" id="PRO_0000139234" description="Methionine--tRNA ligase">
    <location>
        <begin position="1"/>
        <end position="673"/>
    </location>
</feature>
<feature type="domain" description="tRNA-binding">
    <location>
        <begin position="571"/>
        <end position="673"/>
    </location>
</feature>
<feature type="short sequence motif" description="'HIGH' region">
    <location>
        <begin position="14"/>
        <end position="24"/>
    </location>
</feature>
<feature type="short sequence motif" description="'KMSKS' region">
    <location>
        <begin position="310"/>
        <end position="314"/>
    </location>
</feature>
<feature type="binding site" evidence="1">
    <location>
        <position position="313"/>
    </location>
    <ligand>
        <name>ATP</name>
        <dbReference type="ChEBI" id="CHEBI:30616"/>
    </ligand>
</feature>
<reference key="1">
    <citation type="journal article" date="2002" name="Nucleic Acids Res.">
        <title>Genome sequence of Oceanobacillus iheyensis isolated from the Iheya Ridge and its unexpected adaptive capabilities to extreme environments.</title>
        <authorList>
            <person name="Takami H."/>
            <person name="Takaki Y."/>
            <person name="Uchiyama I."/>
        </authorList>
    </citation>
    <scope>NUCLEOTIDE SEQUENCE [LARGE SCALE GENOMIC DNA]</scope>
    <source>
        <strain>DSM 14371 / CIP 107618 / JCM 11309 / KCTC 3954 / HTE831</strain>
    </source>
</reference>
<comment type="function">
    <text evidence="1">Is required not only for elongation of protein synthesis but also for the initiation of all mRNA translation through initiator tRNA(fMet) aminoacylation.</text>
</comment>
<comment type="catalytic activity">
    <reaction>
        <text>tRNA(Met) + L-methionine + ATP = L-methionyl-tRNA(Met) + AMP + diphosphate</text>
        <dbReference type="Rhea" id="RHEA:13481"/>
        <dbReference type="Rhea" id="RHEA-COMP:9667"/>
        <dbReference type="Rhea" id="RHEA-COMP:9698"/>
        <dbReference type="ChEBI" id="CHEBI:30616"/>
        <dbReference type="ChEBI" id="CHEBI:33019"/>
        <dbReference type="ChEBI" id="CHEBI:57844"/>
        <dbReference type="ChEBI" id="CHEBI:78442"/>
        <dbReference type="ChEBI" id="CHEBI:78530"/>
        <dbReference type="ChEBI" id="CHEBI:456215"/>
        <dbReference type="EC" id="6.1.1.10"/>
    </reaction>
</comment>
<comment type="subunit">
    <text evidence="1">Homodimer.</text>
</comment>
<comment type="subcellular location">
    <subcellularLocation>
        <location evidence="1">Cytoplasm</location>
    </subcellularLocation>
</comment>
<comment type="similarity">
    <text evidence="2">Belongs to the class-I aminoacyl-tRNA synthetase family. MetG type 2B subfamily.</text>
</comment>
<name>SYM_OCEIH</name>
<organism>
    <name type="scientific">Oceanobacillus iheyensis (strain DSM 14371 / CIP 107618 / JCM 11309 / KCTC 3954 / HTE831)</name>
    <dbReference type="NCBI Taxonomy" id="221109"/>
    <lineage>
        <taxon>Bacteria</taxon>
        <taxon>Bacillati</taxon>
        <taxon>Bacillota</taxon>
        <taxon>Bacilli</taxon>
        <taxon>Bacillales</taxon>
        <taxon>Bacillaceae</taxon>
        <taxon>Oceanobacillus</taxon>
    </lineage>
</organism>
<keyword id="KW-0030">Aminoacyl-tRNA synthetase</keyword>
<keyword id="KW-0067">ATP-binding</keyword>
<keyword id="KW-0963">Cytoplasm</keyword>
<keyword id="KW-0436">Ligase</keyword>
<keyword id="KW-0547">Nucleotide-binding</keyword>
<keyword id="KW-0648">Protein biosynthesis</keyword>
<keyword id="KW-1185">Reference proteome</keyword>
<keyword id="KW-0694">RNA-binding</keyword>
<keyword id="KW-0820">tRNA-binding</keyword>
<sequence>MARENAFYITTPIYYPSGKLHIGNAYTTIACDVMARYKRMRGFDVFYLTGSDEHGQKIEQKAKEMNISPKAYVDDMAEGMKKLWNTLEISNDKFIRTTEEQHKKVVADIFERFLEQGDIYLDEYEGWYSVPDETFYTETQLEDVERDDDGNVIGGKSPDSGHPVELIKEESYFFRMSKYADRLLKFYEDNPEFIQPESRKNEMINNFIKPGLEDLAVSRTTFSWGVQVPSNPKHVVYVWIDALTNYITALGYGSEDTSLYDKFWPADVHMVGKEIVRFHTIYWPIMLMALDLPLPKKVFAHGWLLMKDGKMSKSKGNVVYPEMLVERYGLDALRYYLMREVAFGSDGVFTPEDFISRVNYDLANDLGNLLNRTVAMINKYFDGKVPEFKGEVTSFDGELQTTANNAVKEYEKHMEGMQFSDALKQVWILISRANKYIDETEPWIVAKDEGRRNELASVMVHLAESLHAAALMLQPFLTHAPKKIAEQLGLGEEYGLDWGTIGFGNFPENTTVVKKGTPIFPRLDLDEEAAYIRDQMANGANAASSEDETGDWDPNETDLVSEKEKQIKYDVFDKVELKVAEVKDCSKVEGADKLLKFRLDAGDNGDRQILSGIAEYYSEPEQLIGKKVVIVANLKPRKMRGEISQGMILSAEYDGKLQIVEAPSEAPNGSSIS</sequence>
<protein>
    <recommendedName>
        <fullName>Methionine--tRNA ligase</fullName>
        <ecNumber>6.1.1.10</ecNumber>
    </recommendedName>
    <alternativeName>
        <fullName>Methionyl-tRNA synthetase</fullName>
        <shortName>MetRS</shortName>
    </alternativeName>
</protein>
<dbReference type="EC" id="6.1.1.10"/>
<dbReference type="EMBL" id="BA000028">
    <property type="protein sequence ID" value="BAC12002.1"/>
    <property type="molecule type" value="Genomic_DNA"/>
</dbReference>
<dbReference type="RefSeq" id="WP_011064448.1">
    <property type="nucleotide sequence ID" value="NC_004193.1"/>
</dbReference>
<dbReference type="SMR" id="P59079"/>
<dbReference type="STRING" id="221109.gene:10732208"/>
<dbReference type="KEGG" id="oih:OB0046"/>
<dbReference type="eggNOG" id="COG0073">
    <property type="taxonomic scope" value="Bacteria"/>
</dbReference>
<dbReference type="eggNOG" id="COG0143">
    <property type="taxonomic scope" value="Bacteria"/>
</dbReference>
<dbReference type="HOGENOM" id="CLU_009710_9_4_9"/>
<dbReference type="OrthoDB" id="9810191at2"/>
<dbReference type="PhylomeDB" id="P59079"/>
<dbReference type="Proteomes" id="UP000000822">
    <property type="component" value="Chromosome"/>
</dbReference>
<dbReference type="GO" id="GO:0005737">
    <property type="term" value="C:cytoplasm"/>
    <property type="evidence" value="ECO:0007669"/>
    <property type="project" value="UniProtKB-SubCell"/>
</dbReference>
<dbReference type="GO" id="GO:0005524">
    <property type="term" value="F:ATP binding"/>
    <property type="evidence" value="ECO:0007669"/>
    <property type="project" value="UniProtKB-UniRule"/>
</dbReference>
<dbReference type="GO" id="GO:0004825">
    <property type="term" value="F:methionine-tRNA ligase activity"/>
    <property type="evidence" value="ECO:0007669"/>
    <property type="project" value="UniProtKB-UniRule"/>
</dbReference>
<dbReference type="GO" id="GO:0000049">
    <property type="term" value="F:tRNA binding"/>
    <property type="evidence" value="ECO:0007669"/>
    <property type="project" value="UniProtKB-KW"/>
</dbReference>
<dbReference type="GO" id="GO:0006431">
    <property type="term" value="P:methionyl-tRNA aminoacylation"/>
    <property type="evidence" value="ECO:0007669"/>
    <property type="project" value="UniProtKB-UniRule"/>
</dbReference>
<dbReference type="CDD" id="cd07957">
    <property type="entry name" value="Anticodon_Ia_Met"/>
    <property type="match status" value="1"/>
</dbReference>
<dbReference type="CDD" id="cd00814">
    <property type="entry name" value="MetRS_core"/>
    <property type="match status" value="1"/>
</dbReference>
<dbReference type="CDD" id="cd02800">
    <property type="entry name" value="tRNA_bind_EcMetRS_like"/>
    <property type="match status" value="1"/>
</dbReference>
<dbReference type="FunFam" id="1.10.730.10:FF:000026">
    <property type="entry name" value="Methionine--tRNA ligase"/>
    <property type="match status" value="1"/>
</dbReference>
<dbReference type="FunFam" id="2.170.220.10:FF:000002">
    <property type="entry name" value="Methionine--tRNA ligase"/>
    <property type="match status" value="1"/>
</dbReference>
<dbReference type="FunFam" id="2.40.50.140:FF:000042">
    <property type="entry name" value="Methionine--tRNA ligase"/>
    <property type="match status" value="1"/>
</dbReference>
<dbReference type="Gene3D" id="2.170.220.10">
    <property type="match status" value="1"/>
</dbReference>
<dbReference type="Gene3D" id="3.40.50.620">
    <property type="entry name" value="HUPs"/>
    <property type="match status" value="1"/>
</dbReference>
<dbReference type="Gene3D" id="1.10.730.10">
    <property type="entry name" value="Isoleucyl-tRNA Synthetase, Domain 1"/>
    <property type="match status" value="1"/>
</dbReference>
<dbReference type="Gene3D" id="2.40.50.140">
    <property type="entry name" value="Nucleic acid-binding proteins"/>
    <property type="match status" value="1"/>
</dbReference>
<dbReference type="HAMAP" id="MF_01228">
    <property type="entry name" value="Met_tRNA_synth_type2"/>
    <property type="match status" value="1"/>
</dbReference>
<dbReference type="InterPro" id="IPR001412">
    <property type="entry name" value="aa-tRNA-synth_I_CS"/>
</dbReference>
<dbReference type="InterPro" id="IPR041872">
    <property type="entry name" value="Anticodon_Met"/>
</dbReference>
<dbReference type="InterPro" id="IPR004495">
    <property type="entry name" value="Met-tRNA-synth_bsu_C"/>
</dbReference>
<dbReference type="InterPro" id="IPR014758">
    <property type="entry name" value="Met-tRNA_synth"/>
</dbReference>
<dbReference type="InterPro" id="IPR023457">
    <property type="entry name" value="Met-tRNA_synth_2"/>
</dbReference>
<dbReference type="InterPro" id="IPR015413">
    <property type="entry name" value="Methionyl/Leucyl_tRNA_Synth"/>
</dbReference>
<dbReference type="InterPro" id="IPR033911">
    <property type="entry name" value="MetRS_core"/>
</dbReference>
<dbReference type="InterPro" id="IPR012340">
    <property type="entry name" value="NA-bd_OB-fold"/>
</dbReference>
<dbReference type="InterPro" id="IPR014729">
    <property type="entry name" value="Rossmann-like_a/b/a_fold"/>
</dbReference>
<dbReference type="InterPro" id="IPR002547">
    <property type="entry name" value="tRNA-bd_dom"/>
</dbReference>
<dbReference type="InterPro" id="IPR009080">
    <property type="entry name" value="tRNAsynth_Ia_anticodon-bd"/>
</dbReference>
<dbReference type="NCBIfam" id="TIGR00398">
    <property type="entry name" value="metG"/>
    <property type="match status" value="1"/>
</dbReference>
<dbReference type="NCBIfam" id="TIGR00399">
    <property type="entry name" value="metG_C_term"/>
    <property type="match status" value="1"/>
</dbReference>
<dbReference type="NCBIfam" id="NF008900">
    <property type="entry name" value="PRK12267.1"/>
    <property type="match status" value="1"/>
</dbReference>
<dbReference type="PANTHER" id="PTHR43326:SF1">
    <property type="entry name" value="METHIONINE--TRNA LIGASE, MITOCHONDRIAL"/>
    <property type="match status" value="1"/>
</dbReference>
<dbReference type="PANTHER" id="PTHR43326">
    <property type="entry name" value="METHIONYL-TRNA SYNTHETASE"/>
    <property type="match status" value="1"/>
</dbReference>
<dbReference type="Pfam" id="PF19303">
    <property type="entry name" value="Anticodon_3"/>
    <property type="match status" value="1"/>
</dbReference>
<dbReference type="Pfam" id="PF09334">
    <property type="entry name" value="tRNA-synt_1g"/>
    <property type="match status" value="1"/>
</dbReference>
<dbReference type="Pfam" id="PF01588">
    <property type="entry name" value="tRNA_bind"/>
    <property type="match status" value="1"/>
</dbReference>
<dbReference type="PRINTS" id="PR01041">
    <property type="entry name" value="TRNASYNTHMET"/>
</dbReference>
<dbReference type="SUPFAM" id="SSF47323">
    <property type="entry name" value="Anticodon-binding domain of a subclass of class I aminoacyl-tRNA synthetases"/>
    <property type="match status" value="1"/>
</dbReference>
<dbReference type="SUPFAM" id="SSF50249">
    <property type="entry name" value="Nucleic acid-binding proteins"/>
    <property type="match status" value="1"/>
</dbReference>
<dbReference type="SUPFAM" id="SSF52374">
    <property type="entry name" value="Nucleotidylyl transferase"/>
    <property type="match status" value="1"/>
</dbReference>
<dbReference type="PROSITE" id="PS00178">
    <property type="entry name" value="AA_TRNA_LIGASE_I"/>
    <property type="match status" value="1"/>
</dbReference>
<dbReference type="PROSITE" id="PS50886">
    <property type="entry name" value="TRBD"/>
    <property type="match status" value="1"/>
</dbReference>
<proteinExistence type="inferred from homology"/>
<evidence type="ECO:0000250" key="1"/>
<evidence type="ECO:0000305" key="2"/>
<accession>P59079</accession>